<proteinExistence type="inferred from homology"/>
<comment type="function">
    <text evidence="1">Involved in the import of serine and threonine into the cell, with the concomitant import of sodium (symport system).</text>
</comment>
<comment type="catalytic activity">
    <reaction evidence="1">
        <text>L-serine(in) + Na(+)(in) = L-serine(out) + Na(+)(out)</text>
        <dbReference type="Rhea" id="RHEA:29575"/>
        <dbReference type="ChEBI" id="CHEBI:29101"/>
        <dbReference type="ChEBI" id="CHEBI:33384"/>
    </reaction>
    <physiologicalReaction direction="right-to-left" evidence="1">
        <dbReference type="Rhea" id="RHEA:29577"/>
    </physiologicalReaction>
</comment>
<comment type="catalytic activity">
    <reaction evidence="1">
        <text>L-threonine(in) + Na(+)(in) = L-threonine(out) + Na(+)(out)</text>
        <dbReference type="Rhea" id="RHEA:69999"/>
        <dbReference type="ChEBI" id="CHEBI:29101"/>
        <dbReference type="ChEBI" id="CHEBI:57926"/>
    </reaction>
    <physiologicalReaction direction="right-to-left" evidence="1">
        <dbReference type="Rhea" id="RHEA:70001"/>
    </physiologicalReaction>
</comment>
<comment type="subcellular location">
    <subcellularLocation>
        <location evidence="1">Cell inner membrane</location>
        <topology evidence="1">Multi-pass membrane protein</topology>
    </subcellularLocation>
</comment>
<comment type="similarity">
    <text evidence="1">Belongs to the dicarboxylate/amino acid:cation symporter (DAACS) (TC 2.A.23) family.</text>
</comment>
<reference key="1">
    <citation type="journal article" date="2007" name="PLoS Genet.">
        <title>Meningococcal genetic variation mechanisms viewed through comparative analysis of serogroup C strain FAM18.</title>
        <authorList>
            <person name="Bentley S.D."/>
            <person name="Vernikos G.S."/>
            <person name="Snyder L.A.S."/>
            <person name="Churcher C."/>
            <person name="Arrowsmith C."/>
            <person name="Chillingworth T."/>
            <person name="Cronin A."/>
            <person name="Davis P.H."/>
            <person name="Holroyd N.E."/>
            <person name="Jagels K."/>
            <person name="Maddison M."/>
            <person name="Moule S."/>
            <person name="Rabbinowitsch E."/>
            <person name="Sharp S."/>
            <person name="Unwin L."/>
            <person name="Whitehead S."/>
            <person name="Quail M.A."/>
            <person name="Achtman M."/>
            <person name="Barrell B.G."/>
            <person name="Saunders N.J."/>
            <person name="Parkhill J."/>
        </authorList>
    </citation>
    <scope>NUCLEOTIDE SEQUENCE [LARGE SCALE GENOMIC DNA]</scope>
    <source>
        <strain>ATCC 700532 / DSM 15464 / FAM18</strain>
    </source>
</reference>
<organism>
    <name type="scientific">Neisseria meningitidis serogroup C / serotype 2a (strain ATCC 700532 / DSM 15464 / FAM18)</name>
    <dbReference type="NCBI Taxonomy" id="272831"/>
    <lineage>
        <taxon>Bacteria</taxon>
        <taxon>Pseudomonadati</taxon>
        <taxon>Pseudomonadota</taxon>
        <taxon>Betaproteobacteria</taxon>
        <taxon>Neisseriales</taxon>
        <taxon>Neisseriaceae</taxon>
        <taxon>Neisseria</taxon>
    </lineage>
</organism>
<keyword id="KW-0029">Amino-acid transport</keyword>
<keyword id="KW-0997">Cell inner membrane</keyword>
<keyword id="KW-1003">Cell membrane</keyword>
<keyword id="KW-0472">Membrane</keyword>
<keyword id="KW-0769">Symport</keyword>
<keyword id="KW-0812">Transmembrane</keyword>
<keyword id="KW-1133">Transmembrane helix</keyword>
<keyword id="KW-0813">Transport</keyword>
<feature type="chain" id="PRO_0000309102" description="Serine/threonine transporter SstT">
    <location>
        <begin position="1"/>
        <end position="409"/>
    </location>
</feature>
<feature type="transmembrane region" description="Helical" evidence="1">
    <location>
        <begin position="24"/>
        <end position="44"/>
    </location>
</feature>
<feature type="transmembrane region" description="Helical" evidence="1">
    <location>
        <begin position="48"/>
        <end position="68"/>
    </location>
</feature>
<feature type="transmembrane region" description="Helical" evidence="1">
    <location>
        <begin position="82"/>
        <end position="102"/>
    </location>
</feature>
<feature type="transmembrane region" description="Helical" evidence="1">
    <location>
        <begin position="142"/>
        <end position="162"/>
    </location>
</feature>
<feature type="transmembrane region" description="Helical" evidence="1">
    <location>
        <begin position="194"/>
        <end position="214"/>
    </location>
</feature>
<feature type="transmembrane region" description="Helical" evidence="1">
    <location>
        <begin position="218"/>
        <end position="238"/>
    </location>
</feature>
<feature type="transmembrane region" description="Helical" evidence="1">
    <location>
        <begin position="292"/>
        <end position="312"/>
    </location>
</feature>
<feature type="transmembrane region" description="Helical" evidence="1">
    <location>
        <begin position="319"/>
        <end position="339"/>
    </location>
</feature>
<feature type="transmembrane region" description="Helical" evidence="1">
    <location>
        <begin position="365"/>
        <end position="385"/>
    </location>
</feature>
<dbReference type="EMBL" id="AM421808">
    <property type="protein sequence ID" value="CAM11262.1"/>
    <property type="molecule type" value="Genomic_DNA"/>
</dbReference>
<dbReference type="RefSeq" id="WP_002218237.1">
    <property type="nucleotide sequence ID" value="NC_008767.1"/>
</dbReference>
<dbReference type="SMR" id="A1KWK2"/>
<dbReference type="KEGG" id="nmc:NMC2110"/>
<dbReference type="HOGENOM" id="CLU_044581_0_0_4"/>
<dbReference type="Proteomes" id="UP000002286">
    <property type="component" value="Chromosome"/>
</dbReference>
<dbReference type="GO" id="GO:0005886">
    <property type="term" value="C:plasma membrane"/>
    <property type="evidence" value="ECO:0007669"/>
    <property type="project" value="UniProtKB-SubCell"/>
</dbReference>
<dbReference type="GO" id="GO:0005295">
    <property type="term" value="F:neutral L-amino acid:sodium symporter activity"/>
    <property type="evidence" value="ECO:0007669"/>
    <property type="project" value="TreeGrafter"/>
</dbReference>
<dbReference type="GO" id="GO:0032329">
    <property type="term" value="P:serine transport"/>
    <property type="evidence" value="ECO:0007669"/>
    <property type="project" value="InterPro"/>
</dbReference>
<dbReference type="GO" id="GO:0015826">
    <property type="term" value="P:threonine transport"/>
    <property type="evidence" value="ECO:0007669"/>
    <property type="project" value="InterPro"/>
</dbReference>
<dbReference type="FunFam" id="1.10.3860.10:FF:000003">
    <property type="entry name" value="Serine/threonine transporter sstT"/>
    <property type="match status" value="1"/>
</dbReference>
<dbReference type="Gene3D" id="1.10.3860.10">
    <property type="entry name" value="Sodium:dicarboxylate symporter"/>
    <property type="match status" value="1"/>
</dbReference>
<dbReference type="HAMAP" id="MF_01582">
    <property type="entry name" value="Ser_Thr_transp_SstT"/>
    <property type="match status" value="1"/>
</dbReference>
<dbReference type="InterPro" id="IPR001991">
    <property type="entry name" value="Na-dicarboxylate_symporter"/>
</dbReference>
<dbReference type="InterPro" id="IPR036458">
    <property type="entry name" value="Na:dicarbo_symporter_sf"/>
</dbReference>
<dbReference type="InterPro" id="IPR023025">
    <property type="entry name" value="Ser_Thr_transp_SstT"/>
</dbReference>
<dbReference type="NCBIfam" id="NF010151">
    <property type="entry name" value="PRK13628.1"/>
    <property type="match status" value="1"/>
</dbReference>
<dbReference type="PANTHER" id="PTHR42865">
    <property type="entry name" value="PROTON/GLUTAMATE-ASPARTATE SYMPORTER"/>
    <property type="match status" value="1"/>
</dbReference>
<dbReference type="PANTHER" id="PTHR42865:SF8">
    <property type="entry name" value="SERINE_THREONINE TRANSPORTER SSTT"/>
    <property type="match status" value="1"/>
</dbReference>
<dbReference type="Pfam" id="PF00375">
    <property type="entry name" value="SDF"/>
    <property type="match status" value="1"/>
</dbReference>
<dbReference type="PRINTS" id="PR00173">
    <property type="entry name" value="EDTRNSPORT"/>
</dbReference>
<dbReference type="SUPFAM" id="SSF118215">
    <property type="entry name" value="Proton glutamate symport protein"/>
    <property type="match status" value="1"/>
</dbReference>
<evidence type="ECO:0000255" key="1">
    <source>
        <dbReference type="HAMAP-Rule" id="MF_01582"/>
    </source>
</evidence>
<accession>A1KWK2</accession>
<sequence>MAFGKSLFHAIGRVSLVRQIAAGLALGIVIGSVSPQLGLAAGLFGSLFVGALKAVAPVLVFILVAATIAQHQKGNKAHIRPIIVLYLIGTFSAALTAVIAGMVFPTHIVLAGAGDVSAAPPSGIVEVLKSLLMNLVANPINAIANANYIGILAWALVLGAALRNHGSDVTRQVVADLAEAVSTVVKWIIRFAPLGIFGLVSSTIAETGFGALAGYAKLLAVLLGCMAFIALVVNPAIVWWKIRRNPYPLVFTCLRESGVYAFFTRSSAANIPVNMALAKKLGLHEDTYSISIPLGATVNMGGAAITITVLAMAAAYTQGIQVDFATALLLSLVATVSACGASGVAGGSLLLIPLACSLFGISNDVAMQVVAVGFIIGVIQDSAETALNSSTDVLFTAAADLGRQRNRAE</sequence>
<gene>
    <name evidence="1" type="primary">sstT</name>
    <name type="ordered locus">NMC2110</name>
</gene>
<name>SSTT_NEIMF</name>
<protein>
    <recommendedName>
        <fullName evidence="1">Serine/threonine transporter SstT</fullName>
    </recommendedName>
    <alternativeName>
        <fullName evidence="1">Na(+)/serine-threonine symporter</fullName>
    </alternativeName>
</protein>